<accession>Q9LR69</accession>
<gene>
    <name type="primary">PCMP-E4</name>
    <name type="ordered locus">At1g03540</name>
    <name type="ORF">F21B7.16</name>
</gene>
<evidence type="ECO:0000305" key="1"/>
<keyword id="KW-1185">Reference proteome</keyword>
<keyword id="KW-0677">Repeat</keyword>
<sequence length="609" mass="67402">MNLIILKRHFSQHASLCLTPSISSSAPTKQSRILELCKLGQLTEAIRILNSTHSSEIPATPKLYASLLQTCNKVFSFIHGIQFHAHVVKSGLETDRNVGNSLLSLYFKLGPGMRETRRVFDGRFVKDAISWTSMMSGYVTGKEHVKALEVFVEMVSFGLDANEFTLSSAVKACSELGEVRLGRCFHGVVITHGFEWNHFISSTLAYLYGVNREPVDARRVFDEMPEPDVICWTAVLSAFSKNDLYEEALGLFYAMHRGKGLVPDGSTFGTVLTACGNLRRLKQGKEIHGKLITNGIGSNVVVESSLLDMYGKCGSVREARQVFNGMSKKNSVSWSALLGGYCQNGEHEKAIEIFREMEEKDLYCFGTVLKACAGLAAVRLGKEIHGQYVRRGCFGNVIVESALIDLYGKSGCIDSASRVYSKMSIRNMITWNAMLSALAQNGRGEEAVSFFNDMVKKGIKPDYISFIAILTACGHTGMVDEGRNYFVLMAKSYGIKPGTEHYSCMIDLLGRAGLFEEAENLLERAECRNDASLWGVLLGPCAANADASRVAERIAKRMMELEPKYHMSYVLLSNMYKAIGRHGDALNIRKLMVRRGVAKTVGQSWIDAH</sequence>
<proteinExistence type="evidence at transcript level"/>
<reference key="1">
    <citation type="journal article" date="2000" name="Nature">
        <title>Sequence and analysis of chromosome 1 of the plant Arabidopsis thaliana.</title>
        <authorList>
            <person name="Theologis A."/>
            <person name="Ecker J.R."/>
            <person name="Palm C.J."/>
            <person name="Federspiel N.A."/>
            <person name="Kaul S."/>
            <person name="White O."/>
            <person name="Alonso J."/>
            <person name="Altafi H."/>
            <person name="Araujo R."/>
            <person name="Bowman C.L."/>
            <person name="Brooks S.Y."/>
            <person name="Buehler E."/>
            <person name="Chan A."/>
            <person name="Chao Q."/>
            <person name="Chen H."/>
            <person name="Cheuk R.F."/>
            <person name="Chin C.W."/>
            <person name="Chung M.K."/>
            <person name="Conn L."/>
            <person name="Conway A.B."/>
            <person name="Conway A.R."/>
            <person name="Creasy T.H."/>
            <person name="Dewar K."/>
            <person name="Dunn P."/>
            <person name="Etgu P."/>
            <person name="Feldblyum T.V."/>
            <person name="Feng J.-D."/>
            <person name="Fong B."/>
            <person name="Fujii C.Y."/>
            <person name="Gill J.E."/>
            <person name="Goldsmith A.D."/>
            <person name="Haas B."/>
            <person name="Hansen N.F."/>
            <person name="Hughes B."/>
            <person name="Huizar L."/>
            <person name="Hunter J.L."/>
            <person name="Jenkins J."/>
            <person name="Johnson-Hopson C."/>
            <person name="Khan S."/>
            <person name="Khaykin E."/>
            <person name="Kim C.J."/>
            <person name="Koo H.L."/>
            <person name="Kremenetskaia I."/>
            <person name="Kurtz D.B."/>
            <person name="Kwan A."/>
            <person name="Lam B."/>
            <person name="Langin-Hooper S."/>
            <person name="Lee A."/>
            <person name="Lee J.M."/>
            <person name="Lenz C.A."/>
            <person name="Li J.H."/>
            <person name="Li Y.-P."/>
            <person name="Lin X."/>
            <person name="Liu S.X."/>
            <person name="Liu Z.A."/>
            <person name="Luros J.S."/>
            <person name="Maiti R."/>
            <person name="Marziali A."/>
            <person name="Militscher J."/>
            <person name="Miranda M."/>
            <person name="Nguyen M."/>
            <person name="Nierman W.C."/>
            <person name="Osborne B.I."/>
            <person name="Pai G."/>
            <person name="Peterson J."/>
            <person name="Pham P.K."/>
            <person name="Rizzo M."/>
            <person name="Rooney T."/>
            <person name="Rowley D."/>
            <person name="Sakano H."/>
            <person name="Salzberg S.L."/>
            <person name="Schwartz J.R."/>
            <person name="Shinn P."/>
            <person name="Southwick A.M."/>
            <person name="Sun H."/>
            <person name="Tallon L.J."/>
            <person name="Tambunga G."/>
            <person name="Toriumi M.J."/>
            <person name="Town C.D."/>
            <person name="Utterback T."/>
            <person name="Van Aken S."/>
            <person name="Vaysberg M."/>
            <person name="Vysotskaia V.S."/>
            <person name="Walker M."/>
            <person name="Wu D."/>
            <person name="Yu G."/>
            <person name="Fraser C.M."/>
            <person name="Venter J.C."/>
            <person name="Davis R.W."/>
        </authorList>
    </citation>
    <scope>NUCLEOTIDE SEQUENCE [LARGE SCALE GENOMIC DNA]</scope>
    <source>
        <strain>cv. Columbia</strain>
    </source>
</reference>
<reference key="2">
    <citation type="journal article" date="2017" name="Plant J.">
        <title>Araport11: a complete reannotation of the Arabidopsis thaliana reference genome.</title>
        <authorList>
            <person name="Cheng C.Y."/>
            <person name="Krishnakumar V."/>
            <person name="Chan A.P."/>
            <person name="Thibaud-Nissen F."/>
            <person name="Schobel S."/>
            <person name="Town C.D."/>
        </authorList>
    </citation>
    <scope>GENOME REANNOTATION</scope>
    <source>
        <strain>cv. Columbia</strain>
    </source>
</reference>
<reference key="3">
    <citation type="journal article" date="2006" name="Plant Biotechnol. J.">
        <title>Simultaneous high-throughput recombinational cloning of open reading frames in closed and open configurations.</title>
        <authorList>
            <person name="Underwood B.A."/>
            <person name="Vanderhaeghen R."/>
            <person name="Whitford R."/>
            <person name="Town C.D."/>
            <person name="Hilson P."/>
        </authorList>
    </citation>
    <scope>NUCLEOTIDE SEQUENCE [LARGE SCALE MRNA]</scope>
    <source>
        <strain>cv. Columbia</strain>
    </source>
</reference>
<reference key="4">
    <citation type="journal article" date="2000" name="Plant Mol. Biol.">
        <title>In Arabidopsis thaliana, 1% of the genome codes for a novel protein family unique to plants.</title>
        <authorList>
            <person name="Aubourg S."/>
            <person name="Boudet N."/>
            <person name="Kreis M."/>
            <person name="Lecharny A."/>
        </authorList>
    </citation>
    <scope>GENE FAMILY</scope>
</reference>
<reference key="5">
    <citation type="journal article" date="2004" name="Plant Cell">
        <title>Genome-wide analysis of Arabidopsis pentatricopeptide repeat proteins reveals their essential role in organelle biogenesis.</title>
        <authorList>
            <person name="Lurin C."/>
            <person name="Andres C."/>
            <person name="Aubourg S."/>
            <person name="Bellaoui M."/>
            <person name="Bitton F."/>
            <person name="Bruyere C."/>
            <person name="Caboche M."/>
            <person name="Debast C."/>
            <person name="Gualberto J."/>
            <person name="Hoffmann B."/>
            <person name="Lecharny A."/>
            <person name="Le Ret M."/>
            <person name="Martin-Magniette M.-L."/>
            <person name="Mireau H."/>
            <person name="Peeters N."/>
            <person name="Renou J.-P."/>
            <person name="Szurek B."/>
            <person name="Taconnat L."/>
            <person name="Small I."/>
        </authorList>
    </citation>
    <scope>GENE FAMILY</scope>
</reference>
<name>PPR8_ARATH</name>
<organism>
    <name type="scientific">Arabidopsis thaliana</name>
    <name type="common">Mouse-ear cress</name>
    <dbReference type="NCBI Taxonomy" id="3702"/>
    <lineage>
        <taxon>Eukaryota</taxon>
        <taxon>Viridiplantae</taxon>
        <taxon>Streptophyta</taxon>
        <taxon>Embryophyta</taxon>
        <taxon>Tracheophyta</taxon>
        <taxon>Spermatophyta</taxon>
        <taxon>Magnoliopsida</taxon>
        <taxon>eudicotyledons</taxon>
        <taxon>Gunneridae</taxon>
        <taxon>Pentapetalae</taxon>
        <taxon>rosids</taxon>
        <taxon>malvids</taxon>
        <taxon>Brassicales</taxon>
        <taxon>Brassicaceae</taxon>
        <taxon>Camelineae</taxon>
        <taxon>Arabidopsis</taxon>
    </lineage>
</organism>
<feature type="chain" id="PRO_0000342749" description="Pentatricopeptide repeat-containing protein At1g03540">
    <location>
        <begin position="1"/>
        <end position="609"/>
    </location>
</feature>
<feature type="repeat" description="PPR 1">
    <location>
        <begin position="25"/>
        <end position="59"/>
    </location>
</feature>
<feature type="repeat" description="PPR 2">
    <location>
        <begin position="60"/>
        <end position="94"/>
    </location>
</feature>
<feature type="repeat" description="PPR 3">
    <location>
        <begin position="95"/>
        <end position="126"/>
    </location>
</feature>
<feature type="repeat" description="PPR 4">
    <location>
        <begin position="127"/>
        <end position="161"/>
    </location>
</feature>
<feature type="repeat" description="PPR 5">
    <location>
        <begin position="162"/>
        <end position="196"/>
    </location>
</feature>
<feature type="repeat" description="PPR 6">
    <location>
        <begin position="197"/>
        <end position="227"/>
    </location>
</feature>
<feature type="repeat" description="PPR 7">
    <location>
        <begin position="228"/>
        <end position="263"/>
    </location>
</feature>
<feature type="repeat" description="PPR 8">
    <location>
        <begin position="264"/>
        <end position="298"/>
    </location>
</feature>
<feature type="repeat" description="PPR 9">
    <location>
        <begin position="299"/>
        <end position="329"/>
    </location>
</feature>
<feature type="repeat" description="PPR 10">
    <location>
        <begin position="330"/>
        <end position="364"/>
    </location>
</feature>
<feature type="repeat" description="PPR 11">
    <location>
        <begin position="396"/>
        <end position="426"/>
    </location>
</feature>
<feature type="repeat" description="PPR 12">
    <location>
        <begin position="427"/>
        <end position="461"/>
    </location>
</feature>
<feature type="repeat" description="PPR 13">
    <location>
        <begin position="462"/>
        <end position="497"/>
    </location>
</feature>
<feature type="repeat" description="PPR 14">
    <location>
        <begin position="498"/>
        <end position="532"/>
    </location>
</feature>
<feature type="region of interest" description="Type E motif">
    <location>
        <begin position="533"/>
        <end position="609"/>
    </location>
</feature>
<protein>
    <recommendedName>
        <fullName>Pentatricopeptide repeat-containing protein At1g03540</fullName>
    </recommendedName>
</protein>
<dbReference type="EMBL" id="AC002560">
    <property type="protein sequence ID" value="AAF86514.1"/>
    <property type="molecule type" value="Genomic_DNA"/>
</dbReference>
<dbReference type="EMBL" id="CP002684">
    <property type="protein sequence ID" value="AEE27584.1"/>
    <property type="molecule type" value="Genomic_DNA"/>
</dbReference>
<dbReference type="EMBL" id="DQ446225">
    <property type="protein sequence ID" value="ABE65596.1"/>
    <property type="molecule type" value="mRNA"/>
</dbReference>
<dbReference type="PIR" id="T00904">
    <property type="entry name" value="T00904"/>
</dbReference>
<dbReference type="RefSeq" id="NP_171853.1">
    <property type="nucleotide sequence ID" value="NM_100236.2"/>
</dbReference>
<dbReference type="SMR" id="Q9LR69"/>
<dbReference type="FunCoup" id="Q9LR69">
    <property type="interactions" value="54"/>
</dbReference>
<dbReference type="STRING" id="3702.Q9LR69"/>
<dbReference type="PaxDb" id="3702-AT1G03540.1"/>
<dbReference type="ProteomicsDB" id="225984"/>
<dbReference type="EnsemblPlants" id="AT1G03540.1">
    <property type="protein sequence ID" value="AT1G03540.1"/>
    <property type="gene ID" value="AT1G03540"/>
</dbReference>
<dbReference type="GeneID" id="839466"/>
<dbReference type="Gramene" id="AT1G03540.1">
    <property type="protein sequence ID" value="AT1G03540.1"/>
    <property type="gene ID" value="AT1G03540"/>
</dbReference>
<dbReference type="KEGG" id="ath:AT1G03540"/>
<dbReference type="Araport" id="AT1G03540"/>
<dbReference type="TAIR" id="AT1G03540"/>
<dbReference type="eggNOG" id="KOG4197">
    <property type="taxonomic scope" value="Eukaryota"/>
</dbReference>
<dbReference type="HOGENOM" id="CLU_002706_15_10_1"/>
<dbReference type="InParanoid" id="Q9LR69"/>
<dbReference type="OMA" id="AICWTSV"/>
<dbReference type="PhylomeDB" id="Q9LR69"/>
<dbReference type="PRO" id="PR:Q9LR69"/>
<dbReference type="Proteomes" id="UP000006548">
    <property type="component" value="Chromosome 1"/>
</dbReference>
<dbReference type="ExpressionAtlas" id="Q9LR69">
    <property type="expression patterns" value="baseline and differential"/>
</dbReference>
<dbReference type="GO" id="GO:0003723">
    <property type="term" value="F:RNA binding"/>
    <property type="evidence" value="ECO:0007669"/>
    <property type="project" value="InterPro"/>
</dbReference>
<dbReference type="GO" id="GO:0009451">
    <property type="term" value="P:RNA modification"/>
    <property type="evidence" value="ECO:0007669"/>
    <property type="project" value="InterPro"/>
</dbReference>
<dbReference type="FunFam" id="1.25.40.10:FF:000344">
    <property type="entry name" value="Pentatricopeptide repeat-containing protein"/>
    <property type="match status" value="1"/>
</dbReference>
<dbReference type="FunFam" id="1.25.40.10:FF:001093">
    <property type="entry name" value="Pentatricopeptide repeat-containing protein At2g34400"/>
    <property type="match status" value="1"/>
</dbReference>
<dbReference type="FunFam" id="1.25.40.10:FF:001535">
    <property type="entry name" value="Putative pentatricopeptide repeat-containing protein, mitochondrial"/>
    <property type="match status" value="1"/>
</dbReference>
<dbReference type="Gene3D" id="1.25.40.10">
    <property type="entry name" value="Tetratricopeptide repeat domain"/>
    <property type="match status" value="4"/>
</dbReference>
<dbReference type="InterPro" id="IPR046848">
    <property type="entry name" value="E_motif"/>
</dbReference>
<dbReference type="InterPro" id="IPR002885">
    <property type="entry name" value="Pentatricopeptide_rpt"/>
</dbReference>
<dbReference type="InterPro" id="IPR046960">
    <property type="entry name" value="PPR_At4g14850-like_plant"/>
</dbReference>
<dbReference type="InterPro" id="IPR011990">
    <property type="entry name" value="TPR-like_helical_dom_sf"/>
</dbReference>
<dbReference type="NCBIfam" id="TIGR00756">
    <property type="entry name" value="PPR"/>
    <property type="match status" value="5"/>
</dbReference>
<dbReference type="PANTHER" id="PTHR47926:SF525">
    <property type="entry name" value="EMB2261"/>
    <property type="match status" value="1"/>
</dbReference>
<dbReference type="PANTHER" id="PTHR47926">
    <property type="entry name" value="PENTATRICOPEPTIDE REPEAT-CONTAINING PROTEIN"/>
    <property type="match status" value="1"/>
</dbReference>
<dbReference type="Pfam" id="PF20431">
    <property type="entry name" value="E_motif"/>
    <property type="match status" value="1"/>
</dbReference>
<dbReference type="Pfam" id="PF01535">
    <property type="entry name" value="PPR"/>
    <property type="match status" value="4"/>
</dbReference>
<dbReference type="Pfam" id="PF13041">
    <property type="entry name" value="PPR_2"/>
    <property type="match status" value="3"/>
</dbReference>
<dbReference type="SUPFAM" id="SSF48452">
    <property type="entry name" value="TPR-like"/>
    <property type="match status" value="1"/>
</dbReference>
<dbReference type="PROSITE" id="PS51375">
    <property type="entry name" value="PPR"/>
    <property type="match status" value="14"/>
</dbReference>
<comment type="similarity">
    <text evidence="1">Belongs to the PPR family. PCMP-E subfamily.</text>
</comment>
<comment type="online information" name="Pentatricopeptide repeat proteins">
    <link uri="https://ppr.plantenergy.uwa.edu.au"/>
</comment>